<keyword id="KW-0029">Amino-acid transport</keyword>
<keyword id="KW-1003">Cell membrane</keyword>
<keyword id="KW-0472">Membrane</keyword>
<keyword id="KW-1185">Reference proteome</keyword>
<keyword id="KW-0812">Transmembrane</keyword>
<keyword id="KW-1133">Transmembrane helix</keyword>
<keyword id="KW-0813">Transport</keyword>
<reference key="1">
    <citation type="journal article" date="2001" name="Genome Res.">
        <title>The complete genome sequence of the lactic acid bacterium Lactococcus lactis ssp. lactis IL1403.</title>
        <authorList>
            <person name="Bolotin A."/>
            <person name="Wincker P."/>
            <person name="Mauger S."/>
            <person name="Jaillon O."/>
            <person name="Malarme K."/>
            <person name="Weissenbach J."/>
            <person name="Ehrlich S.D."/>
            <person name="Sorokin A."/>
        </authorList>
    </citation>
    <scope>NUCLEOTIDE SEQUENCE [LARGE SCALE GENOMIC DNA]</scope>
    <source>
        <strain>IL1403</strain>
    </source>
</reference>
<reference key="2">
    <citation type="journal article" date="2013" name="J. Bacteriol.">
        <title>Cloning, expression, and functional characterization of secondary amino acid transporters of Lactococcus lactis.</title>
        <authorList>
            <person name="Trip H."/>
            <person name="Mulder N.L."/>
            <person name="Lolkema J.S."/>
        </authorList>
    </citation>
    <scope>FUNCTION</scope>
    <source>
        <strain>IL1403</strain>
    </source>
</reference>
<feature type="chain" id="PRO_0000442545" description="Probable agmatine/putrescine antiporter AguD">
    <location>
        <begin position="1"/>
        <end position="466"/>
    </location>
</feature>
<feature type="transmembrane region" description="Helical" evidence="1">
    <location>
        <begin position="8"/>
        <end position="28"/>
    </location>
</feature>
<feature type="transmembrane region" description="Helical" evidence="1">
    <location>
        <begin position="30"/>
        <end position="50"/>
    </location>
</feature>
<feature type="transmembrane region" description="Helical" evidence="1">
    <location>
        <begin position="85"/>
        <end position="105"/>
    </location>
</feature>
<feature type="transmembrane region" description="Helical" evidence="1">
    <location>
        <begin position="120"/>
        <end position="140"/>
    </location>
</feature>
<feature type="transmembrane region" description="Helical" evidence="1">
    <location>
        <begin position="144"/>
        <end position="164"/>
    </location>
</feature>
<feature type="transmembrane region" description="Helical" evidence="1">
    <location>
        <begin position="192"/>
        <end position="212"/>
    </location>
</feature>
<feature type="transmembrane region" description="Helical" evidence="1">
    <location>
        <begin position="226"/>
        <end position="246"/>
    </location>
</feature>
<feature type="transmembrane region" description="Helical" evidence="1">
    <location>
        <begin position="273"/>
        <end position="293"/>
    </location>
</feature>
<feature type="transmembrane region" description="Helical" evidence="1">
    <location>
        <begin position="325"/>
        <end position="345"/>
    </location>
</feature>
<feature type="transmembrane region" description="Helical" evidence="1">
    <location>
        <begin position="350"/>
        <end position="370"/>
    </location>
</feature>
<feature type="transmembrane region" description="Helical" evidence="1">
    <location>
        <begin position="398"/>
        <end position="418"/>
    </location>
</feature>
<feature type="transmembrane region" description="Helical" evidence="1">
    <location>
        <begin position="426"/>
        <end position="446"/>
    </location>
</feature>
<accession>Q9CEY5</accession>
<comment type="function">
    <text evidence="2">Probably catalyzes agmatine/putrescine exchange.</text>
</comment>
<comment type="subcellular location">
    <subcellularLocation>
        <location evidence="4">Cell membrane</location>
        <topology evidence="1">Multi-pass membrane protein</topology>
    </subcellularLocation>
</comment>
<comment type="similarity">
    <text evidence="4">Belongs to the amino acid-polyamine-organocation (APC) superfamily. Glutamate:GABA antiporter (GGA) (TC 2.A.3.7) family.</text>
</comment>
<dbReference type="EMBL" id="AE005176">
    <property type="protein sequence ID" value="AAK05797.1"/>
    <property type="molecule type" value="Genomic_DNA"/>
</dbReference>
<dbReference type="PIR" id="C86837">
    <property type="entry name" value="C86837"/>
</dbReference>
<dbReference type="RefSeq" id="NP_267855.1">
    <property type="nucleotide sequence ID" value="NC_002662.1"/>
</dbReference>
<dbReference type="RefSeq" id="WP_010906100.1">
    <property type="nucleotide sequence ID" value="NC_002662.1"/>
</dbReference>
<dbReference type="SMR" id="Q9CEY5"/>
<dbReference type="PaxDb" id="272623-L138484"/>
<dbReference type="EnsemblBacteria" id="AAK05797">
    <property type="protein sequence ID" value="AAK05797"/>
    <property type="gene ID" value="L138484"/>
</dbReference>
<dbReference type="KEGG" id="lla:L138484"/>
<dbReference type="PATRIC" id="fig|272623.7.peg.1823"/>
<dbReference type="eggNOG" id="COG0531">
    <property type="taxonomic scope" value="Bacteria"/>
</dbReference>
<dbReference type="HOGENOM" id="CLU_020854_1_0_9"/>
<dbReference type="OrthoDB" id="9791588at2"/>
<dbReference type="Proteomes" id="UP000002196">
    <property type="component" value="Chromosome"/>
</dbReference>
<dbReference type="GO" id="GO:0005886">
    <property type="term" value="C:plasma membrane"/>
    <property type="evidence" value="ECO:0007669"/>
    <property type="project" value="UniProtKB-SubCell"/>
</dbReference>
<dbReference type="GO" id="GO:0022857">
    <property type="term" value="F:transmembrane transporter activity"/>
    <property type="evidence" value="ECO:0007669"/>
    <property type="project" value="InterPro"/>
</dbReference>
<dbReference type="GO" id="GO:0006865">
    <property type="term" value="P:amino acid transport"/>
    <property type="evidence" value="ECO:0007669"/>
    <property type="project" value="UniProtKB-KW"/>
</dbReference>
<dbReference type="Gene3D" id="1.20.1740.10">
    <property type="entry name" value="Amino acid/polyamine transporter I"/>
    <property type="match status" value="1"/>
</dbReference>
<dbReference type="InterPro" id="IPR002293">
    <property type="entry name" value="AA/rel_permease1"/>
</dbReference>
<dbReference type="InterPro" id="IPR050367">
    <property type="entry name" value="APC_superfamily"/>
</dbReference>
<dbReference type="PANTHER" id="PTHR42770">
    <property type="entry name" value="AMINO ACID TRANSPORTER-RELATED"/>
    <property type="match status" value="1"/>
</dbReference>
<dbReference type="PANTHER" id="PTHR42770:SF15">
    <property type="entry name" value="GLUTAMATE_GAMMA-AMINOBUTYRATE ANTIPORTER-RELATED"/>
    <property type="match status" value="1"/>
</dbReference>
<dbReference type="Pfam" id="PF13520">
    <property type="entry name" value="AA_permease_2"/>
    <property type="match status" value="1"/>
</dbReference>
<dbReference type="PIRSF" id="PIRSF006060">
    <property type="entry name" value="AA_transporter"/>
    <property type="match status" value="1"/>
</dbReference>
<organism>
    <name type="scientific">Lactococcus lactis subsp. lactis (strain IL1403)</name>
    <name type="common">Streptococcus lactis</name>
    <dbReference type="NCBI Taxonomy" id="272623"/>
    <lineage>
        <taxon>Bacteria</taxon>
        <taxon>Bacillati</taxon>
        <taxon>Bacillota</taxon>
        <taxon>Bacilli</taxon>
        <taxon>Lactobacillales</taxon>
        <taxon>Streptococcaceae</taxon>
        <taxon>Lactococcus</taxon>
    </lineage>
</organism>
<protein>
    <recommendedName>
        <fullName evidence="4">Probable agmatine/putrescine antiporter AguD</fullName>
    </recommendedName>
</protein>
<name>AGUD_LACLA</name>
<sequence length="466" mass="51150">MENGKEKFSLFSAILSVICVVFVAEAAAPVAAIGNSQFFWWIVLIVAFLLPYGLITSELGTTYTGEGGLYDWITKAFDHRWGARASWFYWVNFPLWMASLAVLCPDLLHTMFGFQLNTGISLLIELIFIWVIVLISLYPVSDSVWILNGGAVIKVFLALALGGLGVYSALTKGVANHYTLASLLPSFDLHSLSFISVIIFNLLGFEVICTFADSMENPKKQIPQSIIIGGIVIAAIYMFSAFGIGVAIPTNKLSTSSGLVDSFQVMLGTPTGWFISLIAFLFMLTLVGNMVSWSQGVNNIASYAADNGDMPKFFSKRRASNGISWGAALMNGIVATFIVVIAPLLPNQDLFWSFFSLNLVLFLLSYIPVFPAFYKLRKIDPETPRPFKVSGSDGILKVYMALPMIIIIISLIFTAIPLQYDKASLTEQLPITIGAIIFIVIGELIIKRKLQVQVSQPSSSHMNSYS</sequence>
<proteinExistence type="inferred from homology"/>
<gene>
    <name evidence="3" type="primary">aguD</name>
    <name evidence="5" type="synonym">yrfD</name>
    <name evidence="4" type="ordered locus">LL1699</name>
    <name evidence="5" type="ORF">L138484</name>
</gene>
<evidence type="ECO:0000255" key="1"/>
<evidence type="ECO:0000269" key="2">
    <source>
    </source>
</evidence>
<evidence type="ECO:0000303" key="3">
    <source>
    </source>
</evidence>
<evidence type="ECO:0000305" key="4"/>
<evidence type="ECO:0000312" key="5">
    <source>
        <dbReference type="EMBL" id="AAK05797.1"/>
    </source>
</evidence>